<proteinExistence type="inferred from homology"/>
<comment type="function">
    <text evidence="1">Probable guanine nucleotide exchange factor. Putative effector of Ras and/or Rap. Associates with the GTP-bound form of Rap 1A and H-Ras in vitro (By similarity).</text>
</comment>
<comment type="subunit">
    <text evidence="1">Interacts with SAMD9.</text>
</comment>
<dbReference type="EMBL" id="AJ630366">
    <property type="protein sequence ID" value="CAI11443.1"/>
    <property type="molecule type" value="Genomic_DNA"/>
</dbReference>
<dbReference type="RefSeq" id="XP_038539101.1">
    <property type="nucleotide sequence ID" value="XM_038683173.1"/>
</dbReference>
<dbReference type="SMR" id="Q5TJE5"/>
<dbReference type="FunCoup" id="Q5TJE5">
    <property type="interactions" value="298"/>
</dbReference>
<dbReference type="STRING" id="9615.ENSCAFP00000059991"/>
<dbReference type="PaxDb" id="9612-ENSCAFP00000001375"/>
<dbReference type="GeneID" id="481739"/>
<dbReference type="eggNOG" id="KOG3629">
    <property type="taxonomic scope" value="Eukaryota"/>
</dbReference>
<dbReference type="InParanoid" id="Q5TJE5"/>
<dbReference type="OrthoDB" id="26687at2759"/>
<dbReference type="Proteomes" id="UP000002254">
    <property type="component" value="Unplaced"/>
</dbReference>
<dbReference type="Proteomes" id="UP000694429">
    <property type="component" value="Unplaced"/>
</dbReference>
<dbReference type="Proteomes" id="UP000694542">
    <property type="component" value="Unplaced"/>
</dbReference>
<dbReference type="Proteomes" id="UP000805418">
    <property type="component" value="Unplaced"/>
</dbReference>
<dbReference type="GO" id="GO:0005085">
    <property type="term" value="F:guanyl-nucleotide exchange factor activity"/>
    <property type="evidence" value="ECO:0007669"/>
    <property type="project" value="UniProtKB-KW"/>
</dbReference>
<dbReference type="GO" id="GO:0007264">
    <property type="term" value="P:small GTPase-mediated signal transduction"/>
    <property type="evidence" value="ECO:0007669"/>
    <property type="project" value="InterPro"/>
</dbReference>
<dbReference type="CDD" id="cd17211">
    <property type="entry name" value="RA_RGL2"/>
    <property type="match status" value="1"/>
</dbReference>
<dbReference type="CDD" id="cd00155">
    <property type="entry name" value="RasGEF"/>
    <property type="match status" value="1"/>
</dbReference>
<dbReference type="CDD" id="cd06224">
    <property type="entry name" value="REM"/>
    <property type="match status" value="1"/>
</dbReference>
<dbReference type="FunFam" id="3.10.20.90:FF:000153">
    <property type="entry name" value="Ral guanine nucleotide dissociation stimulator like 2"/>
    <property type="match status" value="1"/>
</dbReference>
<dbReference type="FunFam" id="1.10.840.10:FF:000012">
    <property type="entry name" value="Ral guanine nucleotide dissociation stimulator-like 2"/>
    <property type="match status" value="1"/>
</dbReference>
<dbReference type="Gene3D" id="3.10.20.90">
    <property type="entry name" value="Phosphatidylinositol 3-kinase Catalytic Subunit, Chain A, domain 1"/>
    <property type="match status" value="1"/>
</dbReference>
<dbReference type="Gene3D" id="1.10.840.10">
    <property type="entry name" value="Ras guanine-nucleotide exchange factors catalytic domain"/>
    <property type="match status" value="1"/>
</dbReference>
<dbReference type="Gene3D" id="1.20.870.10">
    <property type="entry name" value="Son of sevenless (SoS) protein Chain: S domain 1"/>
    <property type="match status" value="1"/>
</dbReference>
<dbReference type="InterPro" id="IPR000159">
    <property type="entry name" value="RA_dom"/>
</dbReference>
<dbReference type="InterPro" id="IPR008937">
    <property type="entry name" value="Ras-like_GEF"/>
</dbReference>
<dbReference type="InterPro" id="IPR000651">
    <property type="entry name" value="Ras-like_Gua-exchang_fac_N"/>
</dbReference>
<dbReference type="InterPro" id="IPR019804">
    <property type="entry name" value="Ras_G-nucl-exch_fac_CS"/>
</dbReference>
<dbReference type="InterPro" id="IPR023578">
    <property type="entry name" value="Ras_GEF_dom_sf"/>
</dbReference>
<dbReference type="InterPro" id="IPR001895">
    <property type="entry name" value="RASGEF_cat_dom"/>
</dbReference>
<dbReference type="InterPro" id="IPR036964">
    <property type="entry name" value="RASGEF_cat_dom_sf"/>
</dbReference>
<dbReference type="InterPro" id="IPR029071">
    <property type="entry name" value="Ubiquitin-like_domsf"/>
</dbReference>
<dbReference type="PANTHER" id="PTHR23113">
    <property type="entry name" value="GUANINE NUCLEOTIDE EXCHANGE FACTOR"/>
    <property type="match status" value="1"/>
</dbReference>
<dbReference type="PANTHER" id="PTHR23113:SF367">
    <property type="entry name" value="RAL GUANINE NUCLEOTIDE DISSOCIATION STIMULATOR-LIKE 2 ISOFORM X1"/>
    <property type="match status" value="1"/>
</dbReference>
<dbReference type="Pfam" id="PF00788">
    <property type="entry name" value="RA"/>
    <property type="match status" value="1"/>
</dbReference>
<dbReference type="Pfam" id="PF00617">
    <property type="entry name" value="RasGEF"/>
    <property type="match status" value="1"/>
</dbReference>
<dbReference type="Pfam" id="PF00618">
    <property type="entry name" value="RasGEF_N"/>
    <property type="match status" value="1"/>
</dbReference>
<dbReference type="SMART" id="SM00314">
    <property type="entry name" value="RA"/>
    <property type="match status" value="1"/>
</dbReference>
<dbReference type="SMART" id="SM00147">
    <property type="entry name" value="RasGEF"/>
    <property type="match status" value="1"/>
</dbReference>
<dbReference type="SMART" id="SM00229">
    <property type="entry name" value="RasGEFN"/>
    <property type="match status" value="1"/>
</dbReference>
<dbReference type="SUPFAM" id="SSF48366">
    <property type="entry name" value="Ras GEF"/>
    <property type="match status" value="1"/>
</dbReference>
<dbReference type="SUPFAM" id="SSF54236">
    <property type="entry name" value="Ubiquitin-like"/>
    <property type="match status" value="1"/>
</dbReference>
<dbReference type="PROSITE" id="PS50200">
    <property type="entry name" value="RA"/>
    <property type="match status" value="1"/>
</dbReference>
<dbReference type="PROSITE" id="PS00720">
    <property type="entry name" value="RASGEF"/>
    <property type="match status" value="1"/>
</dbReference>
<dbReference type="PROSITE" id="PS50009">
    <property type="entry name" value="RASGEF_CAT"/>
    <property type="match status" value="1"/>
</dbReference>
<dbReference type="PROSITE" id="PS50212">
    <property type="entry name" value="RASGEF_NTER"/>
    <property type="match status" value="1"/>
</dbReference>
<accession>Q5TJE5</accession>
<evidence type="ECO:0000250" key="1"/>
<evidence type="ECO:0000250" key="2">
    <source>
        <dbReference type="UniProtKB" id="O15211"/>
    </source>
</evidence>
<evidence type="ECO:0000255" key="3">
    <source>
        <dbReference type="PROSITE-ProRule" id="PRU00135"/>
    </source>
</evidence>
<evidence type="ECO:0000255" key="4">
    <source>
        <dbReference type="PROSITE-ProRule" id="PRU00166"/>
    </source>
</evidence>
<evidence type="ECO:0000255" key="5">
    <source>
        <dbReference type="PROSITE-ProRule" id="PRU00168"/>
    </source>
</evidence>
<evidence type="ECO:0000256" key="6">
    <source>
        <dbReference type="SAM" id="MobiDB-lite"/>
    </source>
</evidence>
<reference key="1">
    <citation type="journal article" date="2005" name="Genomics">
        <title>Genomic sequence of the class II region of the canine MHC: comparison with the MHC of other mammalian species.</title>
        <authorList>
            <person name="Debenham S.L."/>
            <person name="Hart E.A."/>
            <person name="Ashurst J.L."/>
            <person name="Howe K.L."/>
            <person name="Quail M.A."/>
            <person name="Ollier W.E.R."/>
            <person name="Binns M.M."/>
        </authorList>
    </citation>
    <scope>NUCLEOTIDE SEQUENCE [LARGE SCALE GENOMIC DNA]</scope>
    <source>
        <strain>Doberman pinscher</strain>
    </source>
</reference>
<keyword id="KW-0344">Guanine-nucleotide releasing factor</keyword>
<keyword id="KW-0597">Phosphoprotein</keyword>
<keyword id="KW-1185">Reference proteome</keyword>
<gene>
    <name type="primary">RGL2</name>
    <name type="synonym">RAB2L</name>
</gene>
<sequence>MLPRPLRLLWDASPPGGVVLSSFRSRDPEEGGGPGGRGVGGGQEEEEEEEEDEAPVSVWDEEEDGATFTVTSRQYRPLDPLAPTPPPRSSRRLRAGTLEALVRHLLDARTSGADVTFTPAFLATHRAFTSTPALLGLVADRLEALESHPTDELERTIGVATSVLSTWLASHPEDFGSEVKGQLDRLESFLLRTGYAAGEGVGGGSADLIRNLRFRVDPQAPDLPKPLALPGDPPADPTDVLVFLADHLAEQLTLLDAELFLHLVPSQCLGSLWGHRDRPGHSHLCPSVRATVTQFNKVAGAVVSSVLGATSAGEGPGEVTIRPLRPPQRARLLEKWIRVAEECRLLRNFSSVYAVVSALQSSPIHRLRAAWGEATRDSLRVFSSLCQIFSEEDNYSQSRELLLQEVKLQPSLESNSKKAPRSGSGSRGGGVVPYLGTFLKDLVMLDAASKDELENGYINFDKRRKEFAVLSELRRLQNECRGYDLRPDPDIQQWLRGLRPLTEAQSHRVSCEVEPPGTSDPPAPRVLRPTLVVSQWTEVLGSVGGPTPLVSWDRPSVGGEEVPGTPAPLLTRLAQHMKWPSVSSLDSALESTPYLHSLADPSHLSPPASSPRPSRGHRRSASCGSPLSGGAEGASKGTEYRGGGSGPGASDCRIIRVQMELGEDGSVYKSILVTSQDKAPSVISRVLKKNNRDSAVASEYELVQLLPGERELTIPPSANVFYAMDGASHDFLLRQRRRPSTATLGLTSSPSASGTPPSEGGGGSFPRIKATGRKIARALF</sequence>
<organism>
    <name type="scientific">Canis lupus familiaris</name>
    <name type="common">Dog</name>
    <name type="synonym">Canis familiaris</name>
    <dbReference type="NCBI Taxonomy" id="9615"/>
    <lineage>
        <taxon>Eukaryota</taxon>
        <taxon>Metazoa</taxon>
        <taxon>Chordata</taxon>
        <taxon>Craniata</taxon>
        <taxon>Vertebrata</taxon>
        <taxon>Euteleostomi</taxon>
        <taxon>Mammalia</taxon>
        <taxon>Eutheria</taxon>
        <taxon>Laurasiatheria</taxon>
        <taxon>Carnivora</taxon>
        <taxon>Caniformia</taxon>
        <taxon>Canidae</taxon>
        <taxon>Canis</taxon>
    </lineage>
</organism>
<protein>
    <recommendedName>
        <fullName>Ral guanine nucleotide dissociation stimulator-like 2</fullName>
        <shortName>RalGDS-like 2</shortName>
    </recommendedName>
    <alternativeName>
        <fullName>Ras-associated protein RAB2L</fullName>
    </alternativeName>
</protein>
<feature type="chain" id="PRO_0000068887" description="Ral guanine nucleotide dissociation stimulator-like 2">
    <location>
        <begin position="1"/>
        <end position="780"/>
    </location>
</feature>
<feature type="domain" description="N-terminal Ras-GEF" evidence="3">
    <location>
        <begin position="89"/>
        <end position="213"/>
    </location>
</feature>
<feature type="domain" description="Ras-GEF" evidence="5">
    <location>
        <begin position="244"/>
        <end position="516"/>
    </location>
</feature>
<feature type="domain" description="Ras-associating" evidence="4">
    <location>
        <begin position="651"/>
        <end position="738"/>
    </location>
</feature>
<feature type="region of interest" description="Disordered" evidence="6">
    <location>
        <begin position="1"/>
        <end position="92"/>
    </location>
</feature>
<feature type="region of interest" description="Disordered" evidence="6">
    <location>
        <begin position="596"/>
        <end position="651"/>
    </location>
</feature>
<feature type="region of interest" description="Disordered" evidence="6">
    <location>
        <begin position="741"/>
        <end position="769"/>
    </location>
</feature>
<feature type="compositionally biased region" description="Gly residues" evidence="6">
    <location>
        <begin position="31"/>
        <end position="42"/>
    </location>
</feature>
<feature type="compositionally biased region" description="Acidic residues" evidence="6">
    <location>
        <begin position="43"/>
        <end position="65"/>
    </location>
</feature>
<feature type="compositionally biased region" description="Low complexity" evidence="6">
    <location>
        <begin position="596"/>
        <end position="613"/>
    </location>
</feature>
<feature type="compositionally biased region" description="Low complexity" evidence="6">
    <location>
        <begin position="741"/>
        <end position="758"/>
    </location>
</feature>
<feature type="modified residue" description="Phosphoserine" evidence="2">
    <location>
        <position position="13"/>
    </location>
</feature>
<name>RGL2_CANLF</name>